<proteinExistence type="inferred from homology"/>
<name>CYOE_ALKEH</name>
<feature type="chain" id="PRO_0000326882" description="Protoheme IX farnesyltransferase">
    <location>
        <begin position="1"/>
        <end position="302"/>
    </location>
</feature>
<feature type="transmembrane region" description="Helical" evidence="1">
    <location>
        <begin position="26"/>
        <end position="46"/>
    </location>
</feature>
<feature type="transmembrane region" description="Helical" evidence="1">
    <location>
        <begin position="48"/>
        <end position="68"/>
    </location>
</feature>
<feature type="transmembrane region" description="Helical" evidence="1">
    <location>
        <begin position="98"/>
        <end position="118"/>
    </location>
</feature>
<feature type="transmembrane region" description="Helical" evidence="1">
    <location>
        <begin position="120"/>
        <end position="140"/>
    </location>
</feature>
<feature type="transmembrane region" description="Helical" evidence="1">
    <location>
        <begin position="148"/>
        <end position="168"/>
    </location>
</feature>
<feature type="transmembrane region" description="Helical" evidence="1">
    <location>
        <begin position="174"/>
        <end position="194"/>
    </location>
</feature>
<feature type="transmembrane region" description="Helical" evidence="1">
    <location>
        <begin position="221"/>
        <end position="241"/>
    </location>
</feature>
<feature type="transmembrane region" description="Helical" evidence="1">
    <location>
        <begin position="244"/>
        <end position="264"/>
    </location>
</feature>
<feature type="transmembrane region" description="Helical" evidence="1">
    <location>
        <begin position="280"/>
        <end position="300"/>
    </location>
</feature>
<gene>
    <name evidence="1" type="primary">cyoE</name>
    <name type="ordered locus">Mlg_0301</name>
</gene>
<evidence type="ECO:0000255" key="1">
    <source>
        <dbReference type="HAMAP-Rule" id="MF_00154"/>
    </source>
</evidence>
<evidence type="ECO:0000305" key="2"/>
<organism>
    <name type="scientific">Alkalilimnicola ehrlichii (strain ATCC BAA-1101 / DSM 17681 / MLHE-1)</name>
    <dbReference type="NCBI Taxonomy" id="187272"/>
    <lineage>
        <taxon>Bacteria</taxon>
        <taxon>Pseudomonadati</taxon>
        <taxon>Pseudomonadota</taxon>
        <taxon>Gammaproteobacteria</taxon>
        <taxon>Chromatiales</taxon>
        <taxon>Ectothiorhodospiraceae</taxon>
        <taxon>Alkalilimnicola</taxon>
    </lineage>
</organism>
<sequence length="302" mass="32879">MQDVVTPAGGVWVHWRDYLTLTKPRVVVLMVFTAIVGMFLASPGQVPWVALTVGSLGIALAAGSAAALNHLADQRIDAIMARTRRRPLPSGHLRPLQVLGFSSLLGVAGLGMLALWINPLTAALTFASLIGYALVYTLYLKRATPQNIVIGGAAGAAPPLLGWTAVTGSVDAHALLLFLIVFVWTPPHFWALAVARLKDYERADVPMLPVVYGERFTRWQILLYTVLLLAVSLLPWATFMGGWLYLAAAVGLGGWYLMLNVRLLLTPGPRLPMRSFRFSIIYLFGLFAALLVDRQLPVWLGA</sequence>
<dbReference type="EC" id="2.5.1.141" evidence="1"/>
<dbReference type="EMBL" id="CP000453">
    <property type="protein sequence ID" value="ABI55656.1"/>
    <property type="status" value="ALT_INIT"/>
    <property type="molecule type" value="Genomic_DNA"/>
</dbReference>
<dbReference type="RefSeq" id="WP_011628052.1">
    <property type="nucleotide sequence ID" value="NC_008340.1"/>
</dbReference>
<dbReference type="SMR" id="Q0ABY1"/>
<dbReference type="KEGG" id="aeh:Mlg_0301"/>
<dbReference type="eggNOG" id="COG0109">
    <property type="taxonomic scope" value="Bacteria"/>
</dbReference>
<dbReference type="HOGENOM" id="CLU_029631_0_2_6"/>
<dbReference type="OrthoDB" id="9814417at2"/>
<dbReference type="UniPathway" id="UPA00834">
    <property type="reaction ID" value="UER00712"/>
</dbReference>
<dbReference type="Proteomes" id="UP000001962">
    <property type="component" value="Chromosome"/>
</dbReference>
<dbReference type="GO" id="GO:0005886">
    <property type="term" value="C:plasma membrane"/>
    <property type="evidence" value="ECO:0007669"/>
    <property type="project" value="UniProtKB-SubCell"/>
</dbReference>
<dbReference type="GO" id="GO:0008495">
    <property type="term" value="F:protoheme IX farnesyltransferase activity"/>
    <property type="evidence" value="ECO:0007669"/>
    <property type="project" value="UniProtKB-UniRule"/>
</dbReference>
<dbReference type="GO" id="GO:0048034">
    <property type="term" value="P:heme O biosynthetic process"/>
    <property type="evidence" value="ECO:0007669"/>
    <property type="project" value="UniProtKB-UniRule"/>
</dbReference>
<dbReference type="CDD" id="cd13957">
    <property type="entry name" value="PT_UbiA_Cox10"/>
    <property type="match status" value="1"/>
</dbReference>
<dbReference type="FunFam" id="1.10.357.140:FF:000001">
    <property type="entry name" value="Protoheme IX farnesyltransferase"/>
    <property type="match status" value="1"/>
</dbReference>
<dbReference type="Gene3D" id="1.10.357.140">
    <property type="entry name" value="UbiA prenyltransferase"/>
    <property type="match status" value="1"/>
</dbReference>
<dbReference type="HAMAP" id="MF_00154">
    <property type="entry name" value="CyoE_CtaB"/>
    <property type="match status" value="1"/>
</dbReference>
<dbReference type="InterPro" id="IPR006369">
    <property type="entry name" value="Protohaem_IX_farnesylTrfase"/>
</dbReference>
<dbReference type="InterPro" id="IPR000537">
    <property type="entry name" value="UbiA_prenyltransferase"/>
</dbReference>
<dbReference type="InterPro" id="IPR030470">
    <property type="entry name" value="UbiA_prenylTrfase_CS"/>
</dbReference>
<dbReference type="InterPro" id="IPR044878">
    <property type="entry name" value="UbiA_sf"/>
</dbReference>
<dbReference type="NCBIfam" id="TIGR01473">
    <property type="entry name" value="cyoE_ctaB"/>
    <property type="match status" value="1"/>
</dbReference>
<dbReference type="NCBIfam" id="NF003349">
    <property type="entry name" value="PRK04375.1-2"/>
    <property type="match status" value="1"/>
</dbReference>
<dbReference type="PANTHER" id="PTHR43448:SF7">
    <property type="entry name" value="4-HYDROXYBENZOATE SOLANESYLTRANSFERASE"/>
    <property type="match status" value="1"/>
</dbReference>
<dbReference type="PANTHER" id="PTHR43448">
    <property type="entry name" value="PROTOHEME IX FARNESYLTRANSFERASE, MITOCHONDRIAL"/>
    <property type="match status" value="1"/>
</dbReference>
<dbReference type="Pfam" id="PF01040">
    <property type="entry name" value="UbiA"/>
    <property type="match status" value="1"/>
</dbReference>
<dbReference type="PROSITE" id="PS00943">
    <property type="entry name" value="UBIA"/>
    <property type="match status" value="1"/>
</dbReference>
<comment type="function">
    <text evidence="1">Converts heme B (protoheme IX) to heme O by substitution of the vinyl group on carbon 2 of heme B porphyrin ring with a hydroxyethyl farnesyl side group.</text>
</comment>
<comment type="catalytic activity">
    <reaction evidence="1">
        <text>heme b + (2E,6E)-farnesyl diphosphate + H2O = Fe(II)-heme o + diphosphate</text>
        <dbReference type="Rhea" id="RHEA:28070"/>
        <dbReference type="ChEBI" id="CHEBI:15377"/>
        <dbReference type="ChEBI" id="CHEBI:33019"/>
        <dbReference type="ChEBI" id="CHEBI:60344"/>
        <dbReference type="ChEBI" id="CHEBI:60530"/>
        <dbReference type="ChEBI" id="CHEBI:175763"/>
        <dbReference type="EC" id="2.5.1.141"/>
    </reaction>
</comment>
<comment type="pathway">
    <text evidence="1">Porphyrin-containing compound metabolism; heme O biosynthesis; heme O from protoheme: step 1/1.</text>
</comment>
<comment type="subcellular location">
    <subcellularLocation>
        <location evidence="1">Cell inner membrane</location>
        <topology evidence="1">Multi-pass membrane protein</topology>
    </subcellularLocation>
</comment>
<comment type="miscellaneous">
    <text evidence="1">Carbon 2 of the heme B porphyrin ring is defined according to the Fischer nomenclature.</text>
</comment>
<comment type="similarity">
    <text evidence="1">Belongs to the UbiA prenyltransferase family. Protoheme IX farnesyltransferase subfamily.</text>
</comment>
<comment type="sequence caution" evidence="2">
    <conflict type="erroneous initiation">
        <sequence resource="EMBL-CDS" id="ABI55656"/>
    </conflict>
</comment>
<reference key="1">
    <citation type="submission" date="2006-08" db="EMBL/GenBank/DDBJ databases">
        <title>Complete sequence of Alkalilimnicola ehrilichei MLHE-1.</title>
        <authorList>
            <person name="Copeland A."/>
            <person name="Lucas S."/>
            <person name="Lapidus A."/>
            <person name="Barry K."/>
            <person name="Detter J.C."/>
            <person name="Glavina del Rio T."/>
            <person name="Hammon N."/>
            <person name="Israni S."/>
            <person name="Dalin E."/>
            <person name="Tice H."/>
            <person name="Pitluck S."/>
            <person name="Sims D."/>
            <person name="Brettin T."/>
            <person name="Bruce D."/>
            <person name="Han C."/>
            <person name="Tapia R."/>
            <person name="Gilna P."/>
            <person name="Schmutz J."/>
            <person name="Larimer F."/>
            <person name="Land M."/>
            <person name="Hauser L."/>
            <person name="Kyrpides N."/>
            <person name="Mikhailova N."/>
            <person name="Oremland R.S."/>
            <person name="Hoeft S.E."/>
            <person name="Switzer-Blum J."/>
            <person name="Kulp T."/>
            <person name="King G."/>
            <person name="Tabita R."/>
            <person name="Witte B."/>
            <person name="Santini J.M."/>
            <person name="Basu P."/>
            <person name="Hollibaugh J.T."/>
            <person name="Xie G."/>
            <person name="Stolz J.F."/>
            <person name="Richardson P."/>
        </authorList>
    </citation>
    <scope>NUCLEOTIDE SEQUENCE [LARGE SCALE GENOMIC DNA]</scope>
    <source>
        <strain>ATCC BAA-1101 / DSM 17681 / MLHE-1</strain>
    </source>
</reference>
<keyword id="KW-0997">Cell inner membrane</keyword>
<keyword id="KW-1003">Cell membrane</keyword>
<keyword id="KW-0350">Heme biosynthesis</keyword>
<keyword id="KW-0472">Membrane</keyword>
<keyword id="KW-1185">Reference proteome</keyword>
<keyword id="KW-0808">Transferase</keyword>
<keyword id="KW-0812">Transmembrane</keyword>
<keyword id="KW-1133">Transmembrane helix</keyword>
<accession>Q0ABY1</accession>
<protein>
    <recommendedName>
        <fullName evidence="1">Protoheme IX farnesyltransferase</fullName>
        <ecNumber evidence="1">2.5.1.141</ecNumber>
    </recommendedName>
    <alternativeName>
        <fullName evidence="1">Heme B farnesyltransferase</fullName>
    </alternativeName>
    <alternativeName>
        <fullName evidence="1">Heme O synthase</fullName>
    </alternativeName>
</protein>